<reference key="1">
    <citation type="journal article" date="1991" name="Genes Dev.">
        <title>AGL1-AGL6, an Arabidopsis gene family with similarity to floral homeotic and transcription factor genes.</title>
        <authorList>
            <person name="Ma H."/>
            <person name="Yanofsky M.F."/>
            <person name="Meyerowitz E.M."/>
        </authorList>
    </citation>
    <scope>NUCLEOTIDE SEQUENCE [MRNA] (ISOFORM 1)</scope>
</reference>
<reference key="2">
    <citation type="journal article" date="1999" name="Nature">
        <title>Sequence and analysis of chromosome 2 of the plant Arabidopsis thaliana.</title>
        <authorList>
            <person name="Lin X."/>
            <person name="Kaul S."/>
            <person name="Rounsley S.D."/>
            <person name="Shea T.P."/>
            <person name="Benito M.-I."/>
            <person name="Town C.D."/>
            <person name="Fujii C.Y."/>
            <person name="Mason T.M."/>
            <person name="Bowman C.L."/>
            <person name="Barnstead M.E."/>
            <person name="Feldblyum T.V."/>
            <person name="Buell C.R."/>
            <person name="Ketchum K.A."/>
            <person name="Lee J.J."/>
            <person name="Ronning C.M."/>
            <person name="Koo H.L."/>
            <person name="Moffat K.S."/>
            <person name="Cronin L.A."/>
            <person name="Shen M."/>
            <person name="Pai G."/>
            <person name="Van Aken S."/>
            <person name="Umayam L."/>
            <person name="Tallon L.J."/>
            <person name="Gill J.E."/>
            <person name="Adams M.D."/>
            <person name="Carrera A.J."/>
            <person name="Creasy T.H."/>
            <person name="Goodman H.M."/>
            <person name="Somerville C.R."/>
            <person name="Copenhaver G.P."/>
            <person name="Preuss D."/>
            <person name="Nierman W.C."/>
            <person name="White O."/>
            <person name="Eisen J.A."/>
            <person name="Salzberg S.L."/>
            <person name="Fraser C.M."/>
            <person name="Venter J.C."/>
        </authorList>
    </citation>
    <scope>NUCLEOTIDE SEQUENCE [LARGE SCALE GENOMIC DNA]</scope>
    <source>
        <strain>cv. Columbia</strain>
    </source>
</reference>
<reference key="3">
    <citation type="journal article" date="2017" name="Plant J.">
        <title>Araport11: a complete reannotation of the Arabidopsis thaliana reference genome.</title>
        <authorList>
            <person name="Cheng C.Y."/>
            <person name="Krishnakumar V."/>
            <person name="Chan A.P."/>
            <person name="Thibaud-Nissen F."/>
            <person name="Schobel S."/>
            <person name="Town C.D."/>
        </authorList>
    </citation>
    <scope>GENOME REANNOTATION</scope>
    <source>
        <strain>cv. Columbia</strain>
    </source>
</reference>
<reference key="4">
    <citation type="submission" date="2006-11" db="EMBL/GenBank/DDBJ databases">
        <title>Arabidopsis ORF clones.</title>
        <authorList>
            <person name="Bautista V.R."/>
            <person name="Kim C.J."/>
            <person name="Chen H."/>
            <person name="Quinitio C."/>
            <person name="Ecker J.R."/>
        </authorList>
    </citation>
    <scope>NUCLEOTIDE SEQUENCE [LARGE SCALE MRNA] (ISOFORM 2)</scope>
    <source>
        <strain>cv. Columbia</strain>
    </source>
</reference>
<reference key="5">
    <citation type="journal article" date="2003" name="Science">
        <title>Empirical analysis of transcriptional activity in the Arabidopsis genome.</title>
        <authorList>
            <person name="Yamada K."/>
            <person name="Lim J."/>
            <person name="Dale J.M."/>
            <person name="Chen H."/>
            <person name="Shinn P."/>
            <person name="Palm C.J."/>
            <person name="Southwick A.M."/>
            <person name="Wu H.C."/>
            <person name="Kim C.J."/>
            <person name="Nguyen M."/>
            <person name="Pham P.K."/>
            <person name="Cheuk R.F."/>
            <person name="Karlin-Newmann G."/>
            <person name="Liu S.X."/>
            <person name="Lam B."/>
            <person name="Sakano H."/>
            <person name="Wu T."/>
            <person name="Yu G."/>
            <person name="Miranda M."/>
            <person name="Quach H.L."/>
            <person name="Tripp M."/>
            <person name="Chang C.H."/>
            <person name="Lee J.M."/>
            <person name="Toriumi M.J."/>
            <person name="Chan M.M."/>
            <person name="Tang C.C."/>
            <person name="Onodera C.S."/>
            <person name="Deng J.M."/>
            <person name="Akiyama K."/>
            <person name="Ansari Y."/>
            <person name="Arakawa T."/>
            <person name="Banh J."/>
            <person name="Banno F."/>
            <person name="Bowser L."/>
            <person name="Brooks S.Y."/>
            <person name="Carninci P."/>
            <person name="Chao Q."/>
            <person name="Choy N."/>
            <person name="Enju A."/>
            <person name="Goldsmith A.D."/>
            <person name="Gurjal M."/>
            <person name="Hansen N.F."/>
            <person name="Hayashizaki Y."/>
            <person name="Johnson-Hopson C."/>
            <person name="Hsuan V.W."/>
            <person name="Iida K."/>
            <person name="Karnes M."/>
            <person name="Khan S."/>
            <person name="Koesema E."/>
            <person name="Ishida J."/>
            <person name="Jiang P.X."/>
            <person name="Jones T."/>
            <person name="Kawai J."/>
            <person name="Kamiya A."/>
            <person name="Meyers C."/>
            <person name="Nakajima M."/>
            <person name="Narusaka M."/>
            <person name="Seki M."/>
            <person name="Sakurai T."/>
            <person name="Satou M."/>
            <person name="Tamse R."/>
            <person name="Vaysberg M."/>
            <person name="Wallender E.K."/>
            <person name="Wong C."/>
            <person name="Yamamura Y."/>
            <person name="Yuan S."/>
            <person name="Shinozaki K."/>
            <person name="Davis R.W."/>
            <person name="Theologis A."/>
            <person name="Ecker J.R."/>
        </authorList>
    </citation>
    <scope>NUCLEOTIDE SEQUENCE [LARGE SCALE MRNA] OF 68-246 (ISOFORM 2)</scope>
    <source>
        <strain>cv. Columbia</strain>
    </source>
</reference>
<reference key="6">
    <citation type="journal article" date="2005" name="Plant Cell">
        <title>Comprehensive interaction map of the Arabidopsis MADS Box transcription factors.</title>
        <authorList>
            <person name="de Folter S."/>
            <person name="Immink R.G.H."/>
            <person name="Kieffer M."/>
            <person name="Parenicova L."/>
            <person name="Henz S.R."/>
            <person name="Weigel D."/>
            <person name="Busscher M."/>
            <person name="Kooiker M."/>
            <person name="Colombo L."/>
            <person name="Kater M.M."/>
            <person name="Davies B."/>
            <person name="Angenent G.C."/>
        </authorList>
    </citation>
    <scope>INTERACTION WITH AGL15 AND AGL16</scope>
</reference>
<reference key="7">
    <citation type="journal article" date="2016" name="PLoS ONE">
        <title>The MADS box genes ABS, SHP1, and SHP2 are essential for the coordination of cell divisions in ovule and seed coat development and for endosperm formation in Arabidopsis thaliana.</title>
        <authorList>
            <person name="Ehlers K."/>
            <person name="Bhide A.S."/>
            <person name="Tekleyohans D.G."/>
            <person name="Wittkop B."/>
            <person name="Snowdon R.J."/>
            <person name="Becker A."/>
        </authorList>
    </citation>
    <scope>FUNCTION</scope>
</reference>
<proteinExistence type="evidence at protein level"/>
<evidence type="ECO:0000255" key="1">
    <source>
        <dbReference type="PROSITE-ProRule" id="PRU00251"/>
    </source>
</evidence>
<evidence type="ECO:0000255" key="2">
    <source>
        <dbReference type="PROSITE-ProRule" id="PRU00629"/>
    </source>
</evidence>
<evidence type="ECO:0000269" key="3">
    <source>
    </source>
</evidence>
<evidence type="ECO:0000269" key="4">
    <source>
    </source>
</evidence>
<evidence type="ECO:0000303" key="5">
    <source>
    </source>
</evidence>
<evidence type="ECO:0000303" key="6">
    <source ref="4"/>
</evidence>
<evidence type="ECO:0000305" key="7"/>
<dbReference type="EMBL" id="M55553">
    <property type="protein sequence ID" value="AAA32735.1"/>
    <property type="molecule type" value="mRNA"/>
</dbReference>
<dbReference type="EMBL" id="AC006931">
    <property type="protein sequence ID" value="AAD21741.2"/>
    <property type="molecule type" value="Genomic_DNA"/>
</dbReference>
<dbReference type="EMBL" id="CP002685">
    <property type="protein sequence ID" value="AEC10174.1"/>
    <property type="molecule type" value="Genomic_DNA"/>
</dbReference>
<dbReference type="EMBL" id="CP002685">
    <property type="protein sequence ID" value="AEC10175.1"/>
    <property type="molecule type" value="Genomic_DNA"/>
</dbReference>
<dbReference type="EMBL" id="BT029453">
    <property type="protein sequence ID" value="ABK59682.1"/>
    <property type="molecule type" value="mRNA"/>
</dbReference>
<dbReference type="EMBL" id="BT003841">
    <property type="protein sequence ID" value="AAO41892.1"/>
    <property type="molecule type" value="mRNA"/>
</dbReference>
<dbReference type="PIR" id="E39534">
    <property type="entry name" value="E39534"/>
</dbReference>
<dbReference type="PIR" id="G84858">
    <property type="entry name" value="G84858"/>
</dbReference>
<dbReference type="RefSeq" id="NP_565986.1">
    <molecule id="P29385-1"/>
    <property type="nucleotide sequence ID" value="NM_129844.5"/>
</dbReference>
<dbReference type="RefSeq" id="NP_850377.1">
    <molecule id="P29385-2"/>
    <property type="nucleotide sequence ID" value="NM_180046.2"/>
</dbReference>
<dbReference type="SMR" id="P29385"/>
<dbReference type="BioGRID" id="4220">
    <property type="interactions" value="18"/>
</dbReference>
<dbReference type="FunCoup" id="P29385">
    <property type="interactions" value="27"/>
</dbReference>
<dbReference type="IntAct" id="P29385">
    <property type="interactions" value="26"/>
</dbReference>
<dbReference type="STRING" id="3702.P29385"/>
<dbReference type="PaxDb" id="3702-AT2G42830.2"/>
<dbReference type="ProteomicsDB" id="244862">
    <molecule id="P29385-1"/>
</dbReference>
<dbReference type="EnsemblPlants" id="AT2G42830.1">
    <molecule id="P29385-1"/>
    <property type="protein sequence ID" value="AT2G42830.1"/>
    <property type="gene ID" value="AT2G42830"/>
</dbReference>
<dbReference type="EnsemblPlants" id="AT2G42830.2">
    <molecule id="P29385-2"/>
    <property type="protein sequence ID" value="AT2G42830.2"/>
    <property type="gene ID" value="AT2G42830"/>
</dbReference>
<dbReference type="GeneID" id="818883"/>
<dbReference type="Gramene" id="AT2G42830.1">
    <molecule id="P29385-1"/>
    <property type="protein sequence ID" value="AT2G42830.1"/>
    <property type="gene ID" value="AT2G42830"/>
</dbReference>
<dbReference type="Gramene" id="AT2G42830.2">
    <molecule id="P29385-2"/>
    <property type="protein sequence ID" value="AT2G42830.2"/>
    <property type="gene ID" value="AT2G42830"/>
</dbReference>
<dbReference type="KEGG" id="ath:AT2G42830"/>
<dbReference type="Araport" id="AT2G42830"/>
<dbReference type="TAIR" id="AT2G42830">
    <property type="gene designation" value="SHP2"/>
</dbReference>
<dbReference type="eggNOG" id="KOG0014">
    <property type="taxonomic scope" value="Eukaryota"/>
</dbReference>
<dbReference type="HOGENOM" id="CLU_053053_0_0_1"/>
<dbReference type="InParanoid" id="P29385"/>
<dbReference type="OMA" id="HDEMVAP"/>
<dbReference type="OrthoDB" id="1898716at2759"/>
<dbReference type="PhylomeDB" id="P29385"/>
<dbReference type="PRO" id="PR:P29385"/>
<dbReference type="Proteomes" id="UP000006548">
    <property type="component" value="Chromosome 2"/>
</dbReference>
<dbReference type="ExpressionAtlas" id="P29385">
    <property type="expression patterns" value="baseline and differential"/>
</dbReference>
<dbReference type="GO" id="GO:0005634">
    <property type="term" value="C:nucleus"/>
    <property type="evidence" value="ECO:0007669"/>
    <property type="project" value="UniProtKB-SubCell"/>
</dbReference>
<dbReference type="GO" id="GO:0003700">
    <property type="term" value="F:DNA-binding transcription factor activity"/>
    <property type="evidence" value="ECO:0000250"/>
    <property type="project" value="TAIR"/>
</dbReference>
<dbReference type="GO" id="GO:0046983">
    <property type="term" value="F:protein dimerization activity"/>
    <property type="evidence" value="ECO:0007669"/>
    <property type="project" value="InterPro"/>
</dbReference>
<dbReference type="GO" id="GO:0000977">
    <property type="term" value="F:RNA polymerase II transcription regulatory region sequence-specific DNA binding"/>
    <property type="evidence" value="ECO:0007669"/>
    <property type="project" value="InterPro"/>
</dbReference>
<dbReference type="GO" id="GO:0000976">
    <property type="term" value="F:transcription cis-regulatory region binding"/>
    <property type="evidence" value="ECO:0000353"/>
    <property type="project" value="TAIR"/>
</dbReference>
<dbReference type="GO" id="GO:0048440">
    <property type="term" value="P:carpel development"/>
    <property type="evidence" value="ECO:0000315"/>
    <property type="project" value="TAIR"/>
</dbReference>
<dbReference type="GO" id="GO:0048481">
    <property type="term" value="P:plant ovule development"/>
    <property type="evidence" value="ECO:0000315"/>
    <property type="project" value="TAIR"/>
</dbReference>
<dbReference type="GO" id="GO:0045944">
    <property type="term" value="P:positive regulation of transcription by RNA polymerase II"/>
    <property type="evidence" value="ECO:0007669"/>
    <property type="project" value="InterPro"/>
</dbReference>
<dbReference type="CDD" id="cd00265">
    <property type="entry name" value="MADS_MEF2_like"/>
    <property type="match status" value="1"/>
</dbReference>
<dbReference type="FunFam" id="3.40.1810.10:FF:000009">
    <property type="entry name" value="agamous-like MADS-box protein AGL11"/>
    <property type="match status" value="1"/>
</dbReference>
<dbReference type="Gene3D" id="3.40.1810.10">
    <property type="entry name" value="Transcription factor, MADS-box"/>
    <property type="match status" value="1"/>
</dbReference>
<dbReference type="InterPro" id="IPR050142">
    <property type="entry name" value="MADS-box/MEF2_TF"/>
</dbReference>
<dbReference type="InterPro" id="IPR033896">
    <property type="entry name" value="MEF2-like_N"/>
</dbReference>
<dbReference type="InterPro" id="IPR002487">
    <property type="entry name" value="TF_Kbox"/>
</dbReference>
<dbReference type="InterPro" id="IPR002100">
    <property type="entry name" value="TF_MADSbox"/>
</dbReference>
<dbReference type="InterPro" id="IPR036879">
    <property type="entry name" value="TF_MADSbox_sf"/>
</dbReference>
<dbReference type="PANTHER" id="PTHR48019">
    <property type="entry name" value="SERUM RESPONSE FACTOR HOMOLOG"/>
    <property type="match status" value="1"/>
</dbReference>
<dbReference type="Pfam" id="PF01486">
    <property type="entry name" value="K-box"/>
    <property type="match status" value="1"/>
</dbReference>
<dbReference type="Pfam" id="PF00319">
    <property type="entry name" value="SRF-TF"/>
    <property type="match status" value="1"/>
</dbReference>
<dbReference type="PRINTS" id="PR00404">
    <property type="entry name" value="MADSDOMAIN"/>
</dbReference>
<dbReference type="SMART" id="SM00432">
    <property type="entry name" value="MADS"/>
    <property type="match status" value="1"/>
</dbReference>
<dbReference type="SUPFAM" id="SSF55455">
    <property type="entry name" value="SRF-like"/>
    <property type="match status" value="1"/>
</dbReference>
<dbReference type="PROSITE" id="PS51297">
    <property type="entry name" value="K_BOX"/>
    <property type="match status" value="1"/>
</dbReference>
<dbReference type="PROSITE" id="PS00350">
    <property type="entry name" value="MADS_BOX_1"/>
    <property type="match status" value="1"/>
</dbReference>
<dbReference type="PROSITE" id="PS50066">
    <property type="entry name" value="MADS_BOX_2"/>
    <property type="match status" value="1"/>
</dbReference>
<gene>
    <name type="primary">AGL5</name>
    <name type="synonym">SHP2</name>
    <name type="ordered locus">At2g42830</name>
    <name type="ORF">F7D19.17</name>
</gene>
<sequence length="246" mass="28157">MEGGASNEVAESSKKIGRGKIEIKRIENTTNRQVTFCKRRNGLLKKAYELSVLCDAEVALVIFSTRGRLYEYANNSVRGTIERYKKACSDAVNPPTITEANTQYYQQEASKLRRQIRDIQNLNRHILGESLGSLNFKELKNLESRLEKGISRVRSKKHEMLVAEIEYMQKREIELQNDNMYLRSKITERTGLQQQESSVIHQGTVYESGVTSSHQSGQYNRNYIAVNLLEPNQNSSNQDQPPLQLV</sequence>
<keyword id="KW-0025">Alternative splicing</keyword>
<keyword id="KW-0217">Developmental protein</keyword>
<keyword id="KW-0238">DNA-binding</keyword>
<keyword id="KW-0287">Flowering</keyword>
<keyword id="KW-0341">Growth regulation</keyword>
<keyword id="KW-0539">Nucleus</keyword>
<keyword id="KW-1185">Reference proteome</keyword>
<keyword id="KW-0804">Transcription</keyword>
<keyword id="KW-0805">Transcription regulation</keyword>
<name>AGL5_ARATH</name>
<protein>
    <recommendedName>
        <fullName>Agamous-like MADS-box protein AGL5</fullName>
    </recommendedName>
    <alternativeName>
        <fullName>Protein SHATTERPROOF 2</fullName>
    </alternativeName>
</protein>
<organism>
    <name type="scientific">Arabidopsis thaliana</name>
    <name type="common">Mouse-ear cress</name>
    <dbReference type="NCBI Taxonomy" id="3702"/>
    <lineage>
        <taxon>Eukaryota</taxon>
        <taxon>Viridiplantae</taxon>
        <taxon>Streptophyta</taxon>
        <taxon>Embryophyta</taxon>
        <taxon>Tracheophyta</taxon>
        <taxon>Spermatophyta</taxon>
        <taxon>Magnoliopsida</taxon>
        <taxon>eudicotyledons</taxon>
        <taxon>Gunneridae</taxon>
        <taxon>Pentapetalae</taxon>
        <taxon>rosids</taxon>
        <taxon>malvids</taxon>
        <taxon>Brassicales</taxon>
        <taxon>Brassicaceae</taxon>
        <taxon>Camelineae</taxon>
        <taxon>Arabidopsis</taxon>
    </lineage>
</organism>
<accession>P29385</accession>
<accession>A0JQ83</accession>
<accession>Q84WG7</accession>
<accession>Q9SJH3</accession>
<comment type="function">
    <text evidence="4">Probable transcription factor. Interacts genetically with TT16/AGL32 in a partially antagonistic manner during flower development. Is essential for the coordination of cell divisions in ovule, seed coat development and endosperm formation (PubMed:27776173).</text>
</comment>
<comment type="subunit">
    <text evidence="3">Interacts with AGL15 and AGL16.</text>
</comment>
<comment type="interaction">
    <interactant intactId="EBI-621949">
        <id>P29385</id>
    </interactant>
    <interactant intactId="EBI-621986">
        <id>Q9SZJ6</id>
        <label>AGL21</label>
    </interactant>
    <organismsDiffer>false</organismsDiffer>
    <experiments>4</experiments>
</comment>
<comment type="interaction">
    <interactant intactId="EBI-621949">
        <id>P29385</id>
    </interactant>
    <interactant intactId="EBI-632935">
        <id>P29382</id>
        <label>SEP1</label>
    </interactant>
    <organismsDiffer>false</organismsDiffer>
    <experiments>3</experiments>
</comment>
<comment type="interaction">
    <interactant intactId="EBI-621949">
        <id>P29385</id>
    </interactant>
    <interactant intactId="EBI-592020">
        <id>O22456</id>
        <label>SEP3</label>
    </interactant>
    <organismsDiffer>false</organismsDiffer>
    <experiments>3</experiments>
</comment>
<comment type="interaction">
    <interactant intactId="EBI-621949">
        <id>P29385</id>
    </interactant>
    <interactant intactId="EBI-592058">
        <id>Q9FVC1</id>
        <label>SVP</label>
    </interactant>
    <organismsDiffer>false</organismsDiffer>
    <experiments>4</experiments>
</comment>
<comment type="interaction">
    <interactant intactId="EBI-621949">
        <id>P29385</id>
    </interactant>
    <interactant intactId="EBI-1999175">
        <id>Q9SVY1</id>
        <label>WIP2</label>
    </interactant>
    <organismsDiffer>false</organismsDiffer>
    <experiments>3</experiments>
</comment>
<comment type="subcellular location">
    <subcellularLocation>
        <location>Nucleus</location>
    </subcellularLocation>
</comment>
<comment type="alternative products">
    <event type="alternative splicing"/>
    <isoform>
        <id>P29385-1</id>
        <name>1</name>
        <sequence type="displayed"/>
    </isoform>
    <isoform>
        <id>P29385-2</id>
        <name>2</name>
        <sequence type="described" ref="VSP_008909"/>
    </isoform>
</comment>
<comment type="miscellaneous">
    <molecule>Isoform 2</molecule>
    <text evidence="7">May be due to a competing acceptor splice site.</text>
</comment>
<feature type="chain" id="PRO_0000199459" description="Agamous-like MADS-box protein AGL5">
    <location>
        <begin position="1"/>
        <end position="246"/>
    </location>
</feature>
<feature type="domain" description="MADS-box" evidence="1">
    <location>
        <begin position="18"/>
        <end position="72"/>
    </location>
</feature>
<feature type="domain" description="K-box" evidence="2">
    <location>
        <begin position="102"/>
        <end position="192"/>
    </location>
</feature>
<feature type="splice variant" id="VSP_008909" description="In isoform 2." evidence="5 6">
    <original>R</original>
    <variation>RVK</variation>
    <location>
        <position position="171"/>
    </location>
</feature>